<keyword id="KW-0002">3D-structure</keyword>
<keyword id="KW-1185">Reference proteome</keyword>
<gene>
    <name type="ordered locus">SP_0238</name>
</gene>
<dbReference type="EMBL" id="AE005672">
    <property type="protein sequence ID" value="AAK74418.1"/>
    <property type="molecule type" value="Genomic_DNA"/>
</dbReference>
<dbReference type="PIR" id="A95028">
    <property type="entry name" value="A95028"/>
</dbReference>
<dbReference type="RefSeq" id="WP_000644124.1">
    <property type="nucleotide sequence ID" value="NZ_CP155539.1"/>
</dbReference>
<dbReference type="PDB" id="1ZPV">
    <property type="method" value="X-ray"/>
    <property type="resolution" value="1.90 A"/>
    <property type="chains" value="A/B/C=1-88"/>
</dbReference>
<dbReference type="PDBsum" id="1ZPV"/>
<dbReference type="SMR" id="P67382"/>
<dbReference type="IntAct" id="P67382">
    <property type="interactions" value="1"/>
</dbReference>
<dbReference type="PaxDb" id="170187-SP_0238"/>
<dbReference type="EnsemblBacteria" id="AAK74418">
    <property type="protein sequence ID" value="AAK74418"/>
    <property type="gene ID" value="SP_0238"/>
</dbReference>
<dbReference type="KEGG" id="spn:SP_0238"/>
<dbReference type="eggNOG" id="COG3830">
    <property type="taxonomic scope" value="Bacteria"/>
</dbReference>
<dbReference type="PhylomeDB" id="P67382"/>
<dbReference type="BioCyc" id="SPNE170187:G1FZB-242-MONOMER"/>
<dbReference type="EvolutionaryTrace" id="P67382"/>
<dbReference type="Proteomes" id="UP000000585">
    <property type="component" value="Chromosome"/>
</dbReference>
<dbReference type="CDD" id="cd04872">
    <property type="entry name" value="ACT_1ZPV"/>
    <property type="match status" value="1"/>
</dbReference>
<dbReference type="FunFam" id="3.30.70.260:FF:000032">
    <property type="entry name" value="UPF0237 protein SP_0238"/>
    <property type="match status" value="1"/>
</dbReference>
<dbReference type="Gene3D" id="3.30.70.260">
    <property type="match status" value="1"/>
</dbReference>
<dbReference type="HAMAP" id="MF_01054">
    <property type="entry name" value="UPF0237"/>
    <property type="match status" value="1"/>
</dbReference>
<dbReference type="InterPro" id="IPR045865">
    <property type="entry name" value="ACT-like_dom_sf"/>
</dbReference>
<dbReference type="InterPro" id="IPR002912">
    <property type="entry name" value="ACT_dom"/>
</dbReference>
<dbReference type="InterPro" id="IPR050990">
    <property type="entry name" value="UPF0237/GcvR_regulator"/>
</dbReference>
<dbReference type="InterPro" id="IPR022986">
    <property type="entry name" value="UPF0237_ACT"/>
</dbReference>
<dbReference type="NCBIfam" id="NF001220">
    <property type="entry name" value="PRK00194.1"/>
    <property type="match status" value="1"/>
</dbReference>
<dbReference type="PANTHER" id="PTHR34875">
    <property type="entry name" value="UPF0237 PROTEIN MJ1558"/>
    <property type="match status" value="1"/>
</dbReference>
<dbReference type="PANTHER" id="PTHR34875:SF6">
    <property type="entry name" value="UPF0237 PROTEIN MJ1558"/>
    <property type="match status" value="1"/>
</dbReference>
<dbReference type="Pfam" id="PF13740">
    <property type="entry name" value="ACT_6"/>
    <property type="match status" value="1"/>
</dbReference>
<dbReference type="SUPFAM" id="SSF55021">
    <property type="entry name" value="ACT-like"/>
    <property type="match status" value="1"/>
</dbReference>
<dbReference type="PROSITE" id="PS51671">
    <property type="entry name" value="ACT"/>
    <property type="match status" value="1"/>
</dbReference>
<name>Y238_STRPN</name>
<protein>
    <recommendedName>
        <fullName evidence="1">UPF0237 protein SP_0238</fullName>
    </recommendedName>
</protein>
<proteinExistence type="evidence at protein level"/>
<evidence type="ECO:0000255" key="1">
    <source>
        <dbReference type="HAMAP-Rule" id="MF_01054"/>
    </source>
</evidence>
<evidence type="ECO:0000269" key="2">
    <source ref="2"/>
</evidence>
<evidence type="ECO:0007829" key="3">
    <source>
        <dbReference type="PDB" id="1ZPV"/>
    </source>
</evidence>
<feature type="chain" id="PRO_0000219907" description="UPF0237 protein SP_0238">
    <location>
        <begin position="1"/>
        <end position="88"/>
    </location>
</feature>
<feature type="domain" description="ACT" evidence="1">
    <location>
        <begin position="4"/>
        <end position="77"/>
    </location>
</feature>
<feature type="strand" evidence="3">
    <location>
        <begin position="1"/>
        <end position="10"/>
    </location>
</feature>
<feature type="helix" evidence="3">
    <location>
        <begin position="15"/>
        <end position="25"/>
    </location>
</feature>
<feature type="strand" evidence="3">
    <location>
        <begin position="29"/>
        <end position="38"/>
    </location>
</feature>
<feature type="strand" evidence="3">
    <location>
        <begin position="41"/>
        <end position="52"/>
    </location>
</feature>
<feature type="helix" evidence="3">
    <location>
        <begin position="56"/>
        <end position="69"/>
    </location>
</feature>
<feature type="strand" evidence="3">
    <location>
        <begin position="73"/>
        <end position="78"/>
    </location>
</feature>
<feature type="helix" evidence="3">
    <location>
        <begin position="79"/>
        <end position="81"/>
    </location>
</feature>
<reference key="1">
    <citation type="journal article" date="2001" name="Science">
        <title>Complete genome sequence of a virulent isolate of Streptococcus pneumoniae.</title>
        <authorList>
            <person name="Tettelin H."/>
            <person name="Nelson K.E."/>
            <person name="Paulsen I.T."/>
            <person name="Eisen J.A."/>
            <person name="Read T.D."/>
            <person name="Peterson S.N."/>
            <person name="Heidelberg J.F."/>
            <person name="DeBoy R.T."/>
            <person name="Haft D.H."/>
            <person name="Dodson R.J."/>
            <person name="Durkin A.S."/>
            <person name="Gwinn M.L."/>
            <person name="Kolonay J.F."/>
            <person name="Nelson W.C."/>
            <person name="Peterson J.D."/>
            <person name="Umayam L.A."/>
            <person name="White O."/>
            <person name="Salzberg S.L."/>
            <person name="Lewis M.R."/>
            <person name="Radune D."/>
            <person name="Holtzapple E.K."/>
            <person name="Khouri H.M."/>
            <person name="Wolf A.M."/>
            <person name="Utterback T.R."/>
            <person name="Hansen C.L."/>
            <person name="McDonald L.A."/>
            <person name="Feldblyum T.V."/>
            <person name="Angiuoli S.V."/>
            <person name="Dickinson T."/>
            <person name="Hickey E.K."/>
            <person name="Holt I.E."/>
            <person name="Loftus B.J."/>
            <person name="Yang F."/>
            <person name="Smith H.O."/>
            <person name="Venter J.C."/>
            <person name="Dougherty B.A."/>
            <person name="Morrison D.A."/>
            <person name="Hollingshead S.K."/>
            <person name="Fraser C.M."/>
        </authorList>
    </citation>
    <scope>NUCLEOTIDE SEQUENCE [LARGE SCALE GENOMIC DNA]</scope>
    <source>
        <strain>ATCC BAA-334 / TIGR4</strain>
    </source>
</reference>
<reference key="2">
    <citation type="submission" date="2005-06" db="PDB data bank">
        <title>X-ray crystal structure of ACT domain protein from Streptococcus pneumoniae.</title>
        <authorList>
            <consortium name="Midwest center for structural genomics (MCSG)"/>
        </authorList>
    </citation>
    <scope>X-RAY CRYSTALLOGRAPHY (1.90 ANGSTROMS)</scope>
    <scope>SUBUNIT</scope>
</reference>
<comment type="subunit">
    <text evidence="1 2">Homodimer.</text>
</comment>
<comment type="similarity">
    <text evidence="1">Belongs to the UPF0237 family.</text>
</comment>
<accession>P67382</accession>
<accession>Q8DRD3</accession>
<accession>Q97ST5</accession>
<sequence>MKAIITVVGKDKSGIVAGVSGKIAELGLNIDDISQTVLDEYFTMMAVVSSDEKQDFTYLRNEFEAFGQTLNVKINIQSAAIFEAMYNI</sequence>
<organism>
    <name type="scientific">Streptococcus pneumoniae serotype 4 (strain ATCC BAA-334 / TIGR4)</name>
    <dbReference type="NCBI Taxonomy" id="170187"/>
    <lineage>
        <taxon>Bacteria</taxon>
        <taxon>Bacillati</taxon>
        <taxon>Bacillota</taxon>
        <taxon>Bacilli</taxon>
        <taxon>Lactobacillales</taxon>
        <taxon>Streptococcaceae</taxon>
        <taxon>Streptococcus</taxon>
    </lineage>
</organism>